<protein>
    <recommendedName>
        <fullName evidence="1">ATP-dependent Clp protease proteolytic subunit</fullName>
        <ecNumber evidence="1">3.4.21.92</ecNumber>
    </recommendedName>
    <alternativeName>
        <fullName evidence="1">Endopeptidase Clp</fullName>
    </alternativeName>
</protein>
<evidence type="ECO:0000255" key="1">
    <source>
        <dbReference type="HAMAP-Rule" id="MF_00444"/>
    </source>
</evidence>
<sequence length="196" mass="21670">MIPVVIEQTSRGERSYDIYSRLLKDRIIMLTGPVEDNMANSIIAQLLFLDAQDNTKDIYLYINSPGGSVSAGLAIVDTMNFIKSDVQTIVMGIAASMGTIIASSGAKGKRFMLPNAEYLIHQPMGGTGGGTQQSDMAIAAEQLLKTRKKLEKILSDNSGKTIKQIHKDAERDYWMDAKETLKYGFIDEIMENNELK</sequence>
<comment type="function">
    <text evidence="1">Cleaves peptides in various proteins in a process that requires ATP hydrolysis. Has a chymotrypsin-like activity. Plays a major role in the degradation of misfolded proteins.</text>
</comment>
<comment type="catalytic activity">
    <reaction evidence="1">
        <text>Hydrolysis of proteins to small peptides in the presence of ATP and magnesium. alpha-casein is the usual test substrate. In the absence of ATP, only oligopeptides shorter than five residues are hydrolyzed (such as succinyl-Leu-Tyr-|-NHMec, and Leu-Tyr-Leu-|-Tyr-Trp, in which cleavage of the -Tyr-|-Leu- and -Tyr-|-Trp bonds also occurs).</text>
        <dbReference type="EC" id="3.4.21.92"/>
    </reaction>
</comment>
<comment type="subunit">
    <text evidence="1">Fourteen ClpP subunits assemble into 2 heptameric rings which stack back to back to give a disk-like structure with a central cavity, resembling the structure of eukaryotic proteasomes.</text>
</comment>
<comment type="subcellular location">
    <subcellularLocation>
        <location evidence="1">Cytoplasm</location>
    </subcellularLocation>
</comment>
<comment type="similarity">
    <text evidence="1">Belongs to the peptidase S14 family.</text>
</comment>
<accession>Q8DST7</accession>
<gene>
    <name evidence="1" type="primary">clpP</name>
    <name type="ordered locus">SMU_1672</name>
</gene>
<feature type="chain" id="PRO_0000179669" description="ATP-dependent Clp protease proteolytic subunit">
    <location>
        <begin position="1"/>
        <end position="196"/>
    </location>
</feature>
<feature type="active site" description="Nucleophile" evidence="1">
    <location>
        <position position="96"/>
    </location>
</feature>
<feature type="active site" evidence="1">
    <location>
        <position position="121"/>
    </location>
</feature>
<dbReference type="EC" id="3.4.21.92" evidence="1"/>
<dbReference type="EMBL" id="AE014133">
    <property type="protein sequence ID" value="AAN59311.1"/>
    <property type="molecule type" value="Genomic_DNA"/>
</dbReference>
<dbReference type="RefSeq" id="NP_722005.1">
    <property type="nucleotide sequence ID" value="NC_004350.2"/>
</dbReference>
<dbReference type="SMR" id="Q8DST7"/>
<dbReference type="STRING" id="210007.SMU_1672"/>
<dbReference type="MEROPS" id="S14.001"/>
<dbReference type="KEGG" id="smu:SMU_1672"/>
<dbReference type="PATRIC" id="fig|210007.7.peg.1494"/>
<dbReference type="eggNOG" id="COG0740">
    <property type="taxonomic scope" value="Bacteria"/>
</dbReference>
<dbReference type="HOGENOM" id="CLU_058707_3_2_9"/>
<dbReference type="OrthoDB" id="9802800at2"/>
<dbReference type="PhylomeDB" id="Q8DST7"/>
<dbReference type="Proteomes" id="UP000002512">
    <property type="component" value="Chromosome"/>
</dbReference>
<dbReference type="GO" id="GO:0005737">
    <property type="term" value="C:cytoplasm"/>
    <property type="evidence" value="ECO:0007669"/>
    <property type="project" value="UniProtKB-SubCell"/>
</dbReference>
<dbReference type="GO" id="GO:0009368">
    <property type="term" value="C:endopeptidase Clp complex"/>
    <property type="evidence" value="ECO:0007669"/>
    <property type="project" value="TreeGrafter"/>
</dbReference>
<dbReference type="GO" id="GO:0004176">
    <property type="term" value="F:ATP-dependent peptidase activity"/>
    <property type="evidence" value="ECO:0007669"/>
    <property type="project" value="InterPro"/>
</dbReference>
<dbReference type="GO" id="GO:0051117">
    <property type="term" value="F:ATPase binding"/>
    <property type="evidence" value="ECO:0007669"/>
    <property type="project" value="TreeGrafter"/>
</dbReference>
<dbReference type="GO" id="GO:0004252">
    <property type="term" value="F:serine-type endopeptidase activity"/>
    <property type="evidence" value="ECO:0007669"/>
    <property type="project" value="UniProtKB-UniRule"/>
</dbReference>
<dbReference type="GO" id="GO:0045892">
    <property type="term" value="P:negative regulation of DNA-templated transcription"/>
    <property type="evidence" value="ECO:0000315"/>
    <property type="project" value="CACAO"/>
</dbReference>
<dbReference type="GO" id="GO:0006515">
    <property type="term" value="P:protein quality control for misfolded or incompletely synthesized proteins"/>
    <property type="evidence" value="ECO:0007669"/>
    <property type="project" value="TreeGrafter"/>
</dbReference>
<dbReference type="CDD" id="cd07017">
    <property type="entry name" value="S14_ClpP_2"/>
    <property type="match status" value="1"/>
</dbReference>
<dbReference type="FunFam" id="3.90.226.10:FF:000014">
    <property type="entry name" value="ATP-dependent Clp protease proteolytic subunit"/>
    <property type="match status" value="1"/>
</dbReference>
<dbReference type="Gene3D" id="3.90.226.10">
    <property type="entry name" value="2-enoyl-CoA Hydratase, Chain A, domain 1"/>
    <property type="match status" value="1"/>
</dbReference>
<dbReference type="HAMAP" id="MF_00444">
    <property type="entry name" value="ClpP"/>
    <property type="match status" value="1"/>
</dbReference>
<dbReference type="InterPro" id="IPR001907">
    <property type="entry name" value="ClpP"/>
</dbReference>
<dbReference type="InterPro" id="IPR029045">
    <property type="entry name" value="ClpP/crotonase-like_dom_sf"/>
</dbReference>
<dbReference type="InterPro" id="IPR023562">
    <property type="entry name" value="ClpP/TepA"/>
</dbReference>
<dbReference type="InterPro" id="IPR033135">
    <property type="entry name" value="ClpP_His_AS"/>
</dbReference>
<dbReference type="InterPro" id="IPR018215">
    <property type="entry name" value="ClpP_Ser_AS"/>
</dbReference>
<dbReference type="NCBIfam" id="NF001368">
    <property type="entry name" value="PRK00277.1"/>
    <property type="match status" value="1"/>
</dbReference>
<dbReference type="NCBIfam" id="NF009205">
    <property type="entry name" value="PRK12553.1"/>
    <property type="match status" value="1"/>
</dbReference>
<dbReference type="PANTHER" id="PTHR10381">
    <property type="entry name" value="ATP-DEPENDENT CLP PROTEASE PROTEOLYTIC SUBUNIT"/>
    <property type="match status" value="1"/>
</dbReference>
<dbReference type="PANTHER" id="PTHR10381:SF70">
    <property type="entry name" value="ATP-DEPENDENT CLP PROTEASE PROTEOLYTIC SUBUNIT"/>
    <property type="match status" value="1"/>
</dbReference>
<dbReference type="Pfam" id="PF00574">
    <property type="entry name" value="CLP_protease"/>
    <property type="match status" value="1"/>
</dbReference>
<dbReference type="PRINTS" id="PR00127">
    <property type="entry name" value="CLPPROTEASEP"/>
</dbReference>
<dbReference type="SUPFAM" id="SSF52096">
    <property type="entry name" value="ClpP/crotonase"/>
    <property type="match status" value="1"/>
</dbReference>
<dbReference type="PROSITE" id="PS00382">
    <property type="entry name" value="CLP_PROTEASE_HIS"/>
    <property type="match status" value="1"/>
</dbReference>
<dbReference type="PROSITE" id="PS00381">
    <property type="entry name" value="CLP_PROTEASE_SER"/>
    <property type="match status" value="1"/>
</dbReference>
<name>CLPP_STRMU</name>
<keyword id="KW-0963">Cytoplasm</keyword>
<keyword id="KW-0378">Hydrolase</keyword>
<keyword id="KW-0645">Protease</keyword>
<keyword id="KW-1185">Reference proteome</keyword>
<keyword id="KW-0720">Serine protease</keyword>
<proteinExistence type="inferred from homology"/>
<organism>
    <name type="scientific">Streptococcus mutans serotype c (strain ATCC 700610 / UA159)</name>
    <dbReference type="NCBI Taxonomy" id="210007"/>
    <lineage>
        <taxon>Bacteria</taxon>
        <taxon>Bacillati</taxon>
        <taxon>Bacillota</taxon>
        <taxon>Bacilli</taxon>
        <taxon>Lactobacillales</taxon>
        <taxon>Streptococcaceae</taxon>
        <taxon>Streptococcus</taxon>
    </lineage>
</organism>
<reference key="1">
    <citation type="journal article" date="2002" name="Proc. Natl. Acad. Sci. U.S.A.">
        <title>Genome sequence of Streptococcus mutans UA159, a cariogenic dental pathogen.</title>
        <authorList>
            <person name="Ajdic D.J."/>
            <person name="McShan W.M."/>
            <person name="McLaughlin R.E."/>
            <person name="Savic G."/>
            <person name="Chang J."/>
            <person name="Carson M.B."/>
            <person name="Primeaux C."/>
            <person name="Tian R."/>
            <person name="Kenton S."/>
            <person name="Jia H.G."/>
            <person name="Lin S.P."/>
            <person name="Qian Y."/>
            <person name="Li S."/>
            <person name="Zhu H."/>
            <person name="Najar F.Z."/>
            <person name="Lai H."/>
            <person name="White J."/>
            <person name="Roe B.A."/>
            <person name="Ferretti J.J."/>
        </authorList>
    </citation>
    <scope>NUCLEOTIDE SEQUENCE [LARGE SCALE GENOMIC DNA]</scope>
    <source>
        <strain>ATCC 700610 / UA159</strain>
    </source>
</reference>